<protein>
    <recommendedName>
        <fullName>ATP-dependent RNA helicase has1</fullName>
        <ecNumber>3.6.4.13</ecNumber>
    </recommendedName>
</protein>
<keyword id="KW-0067">ATP-binding</keyword>
<keyword id="KW-0347">Helicase</keyword>
<keyword id="KW-0378">Hydrolase</keyword>
<keyword id="KW-0547">Nucleotide-binding</keyword>
<keyword id="KW-0539">Nucleus</keyword>
<keyword id="KW-1185">Reference proteome</keyword>
<keyword id="KW-0690">Ribosome biogenesis</keyword>
<keyword id="KW-0694">RNA-binding</keyword>
<keyword id="KW-0698">rRNA processing</keyword>
<name>HAS1_ASPFU</name>
<comment type="function">
    <text>ATP-dependent RNA helicase involved in 40S ribosomal subunit biogenesis. Required for the processing and cleavage of 35S pre-rRNA at sites A0, A1, and A2, leading to mature 18S rRNA.</text>
</comment>
<comment type="catalytic activity">
    <reaction>
        <text>ATP + H2O = ADP + phosphate + H(+)</text>
        <dbReference type="Rhea" id="RHEA:13065"/>
        <dbReference type="ChEBI" id="CHEBI:15377"/>
        <dbReference type="ChEBI" id="CHEBI:15378"/>
        <dbReference type="ChEBI" id="CHEBI:30616"/>
        <dbReference type="ChEBI" id="CHEBI:43474"/>
        <dbReference type="ChEBI" id="CHEBI:456216"/>
        <dbReference type="EC" id="3.6.4.13"/>
    </reaction>
</comment>
<comment type="subunit">
    <text evidence="1">Associates in the nucleolus with the 60S and pre-60S ribosomal subunits.</text>
</comment>
<comment type="subcellular location">
    <subcellularLocation>
        <location evidence="1">Nucleus</location>
        <location evidence="1">Nucleolus</location>
    </subcellularLocation>
</comment>
<comment type="domain">
    <text>The Q motif is unique to and characteristic of the DEAD box family of RNA helicases and controls ATP binding and hydrolysis.</text>
</comment>
<comment type="similarity">
    <text evidence="5">Belongs to the DEAD box helicase family. DDX18/HAS1 subfamily.</text>
</comment>
<organism>
    <name type="scientific">Aspergillus fumigatus (strain ATCC MYA-4609 / CBS 101355 / FGSC A1100 / Af293)</name>
    <name type="common">Neosartorya fumigata</name>
    <dbReference type="NCBI Taxonomy" id="330879"/>
    <lineage>
        <taxon>Eukaryota</taxon>
        <taxon>Fungi</taxon>
        <taxon>Dikarya</taxon>
        <taxon>Ascomycota</taxon>
        <taxon>Pezizomycotina</taxon>
        <taxon>Eurotiomycetes</taxon>
        <taxon>Eurotiomycetidae</taxon>
        <taxon>Eurotiales</taxon>
        <taxon>Aspergillaceae</taxon>
        <taxon>Aspergillus</taxon>
        <taxon>Aspergillus subgen. Fumigati</taxon>
    </lineage>
</organism>
<reference key="1">
    <citation type="journal article" date="2005" name="Nature">
        <title>Genomic sequence of the pathogenic and allergenic filamentous fungus Aspergillus fumigatus.</title>
        <authorList>
            <person name="Nierman W.C."/>
            <person name="Pain A."/>
            <person name="Anderson M.J."/>
            <person name="Wortman J.R."/>
            <person name="Kim H.S."/>
            <person name="Arroyo J."/>
            <person name="Berriman M."/>
            <person name="Abe K."/>
            <person name="Archer D.B."/>
            <person name="Bermejo C."/>
            <person name="Bennett J.W."/>
            <person name="Bowyer P."/>
            <person name="Chen D."/>
            <person name="Collins M."/>
            <person name="Coulsen R."/>
            <person name="Davies R."/>
            <person name="Dyer P.S."/>
            <person name="Farman M.L."/>
            <person name="Fedorova N."/>
            <person name="Fedorova N.D."/>
            <person name="Feldblyum T.V."/>
            <person name="Fischer R."/>
            <person name="Fosker N."/>
            <person name="Fraser A."/>
            <person name="Garcia J.L."/>
            <person name="Garcia M.J."/>
            <person name="Goble A."/>
            <person name="Goldman G.H."/>
            <person name="Gomi K."/>
            <person name="Griffith-Jones S."/>
            <person name="Gwilliam R."/>
            <person name="Haas B.J."/>
            <person name="Haas H."/>
            <person name="Harris D.E."/>
            <person name="Horiuchi H."/>
            <person name="Huang J."/>
            <person name="Humphray S."/>
            <person name="Jimenez J."/>
            <person name="Keller N."/>
            <person name="Khouri H."/>
            <person name="Kitamoto K."/>
            <person name="Kobayashi T."/>
            <person name="Konzack S."/>
            <person name="Kulkarni R."/>
            <person name="Kumagai T."/>
            <person name="Lafton A."/>
            <person name="Latge J.-P."/>
            <person name="Li W."/>
            <person name="Lord A."/>
            <person name="Lu C."/>
            <person name="Majoros W.H."/>
            <person name="May G.S."/>
            <person name="Miller B.L."/>
            <person name="Mohamoud Y."/>
            <person name="Molina M."/>
            <person name="Monod M."/>
            <person name="Mouyna I."/>
            <person name="Mulligan S."/>
            <person name="Murphy L.D."/>
            <person name="O'Neil S."/>
            <person name="Paulsen I."/>
            <person name="Penalva M.A."/>
            <person name="Pertea M."/>
            <person name="Price C."/>
            <person name="Pritchard B.L."/>
            <person name="Quail M.A."/>
            <person name="Rabbinowitsch E."/>
            <person name="Rawlins N."/>
            <person name="Rajandream M.A."/>
            <person name="Reichard U."/>
            <person name="Renauld H."/>
            <person name="Robson G.D."/>
            <person name="Rodriguez de Cordoba S."/>
            <person name="Rodriguez-Pena J.M."/>
            <person name="Ronning C.M."/>
            <person name="Rutter S."/>
            <person name="Salzberg S.L."/>
            <person name="Sanchez M."/>
            <person name="Sanchez-Ferrero J.C."/>
            <person name="Saunders D."/>
            <person name="Seeger K."/>
            <person name="Squares R."/>
            <person name="Squares S."/>
            <person name="Takeuchi M."/>
            <person name="Tekaia F."/>
            <person name="Turner G."/>
            <person name="Vazquez de Aldana C.R."/>
            <person name="Weidman J."/>
            <person name="White O."/>
            <person name="Woodward J.R."/>
            <person name="Yu J.-H."/>
            <person name="Fraser C.M."/>
            <person name="Galagan J.E."/>
            <person name="Asai K."/>
            <person name="Machida M."/>
            <person name="Hall N."/>
            <person name="Barrell B.G."/>
            <person name="Denning D.W."/>
        </authorList>
    </citation>
    <scope>NUCLEOTIDE SEQUENCE [LARGE SCALE GENOMIC DNA]</scope>
    <source>
        <strain>ATCC MYA-4609 / CBS 101355 / FGSC A1100 / Af293</strain>
    </source>
</reference>
<feature type="chain" id="PRO_0000232205" description="ATP-dependent RNA helicase has1">
    <location>
        <begin position="1"/>
        <end position="622"/>
    </location>
</feature>
<feature type="domain" description="Helicase ATP-binding" evidence="2">
    <location>
        <begin position="171"/>
        <end position="347"/>
    </location>
</feature>
<feature type="domain" description="Helicase C-terminal" evidence="3">
    <location>
        <begin position="361"/>
        <end position="531"/>
    </location>
</feature>
<feature type="region of interest" description="Disordered" evidence="4">
    <location>
        <begin position="1"/>
        <end position="143"/>
    </location>
</feature>
<feature type="region of interest" description="Disordered" evidence="4">
    <location>
        <begin position="588"/>
        <end position="622"/>
    </location>
</feature>
<feature type="short sequence motif" description="Q motif">
    <location>
        <begin position="140"/>
        <end position="168"/>
    </location>
</feature>
<feature type="short sequence motif" description="DEAD box">
    <location>
        <begin position="294"/>
        <end position="297"/>
    </location>
</feature>
<feature type="short sequence motif" description="Bipartite nuclear localization signal" evidence="1">
    <location>
        <begin position="373"/>
        <end position="389"/>
    </location>
</feature>
<feature type="compositionally biased region" description="Basic residues" evidence="4">
    <location>
        <begin position="11"/>
        <end position="21"/>
    </location>
</feature>
<feature type="compositionally biased region" description="Basic and acidic residues" evidence="4">
    <location>
        <begin position="51"/>
        <end position="63"/>
    </location>
</feature>
<feature type="compositionally biased region" description="Acidic residues" evidence="4">
    <location>
        <begin position="93"/>
        <end position="112"/>
    </location>
</feature>
<feature type="compositionally biased region" description="Polar residues" evidence="4">
    <location>
        <begin position="122"/>
        <end position="132"/>
    </location>
</feature>
<feature type="compositionally biased region" description="Low complexity" evidence="4">
    <location>
        <begin position="598"/>
        <end position="608"/>
    </location>
</feature>
<feature type="compositionally biased region" description="Basic residues" evidence="4">
    <location>
        <begin position="612"/>
        <end position="622"/>
    </location>
</feature>
<feature type="binding site" evidence="2">
    <location>
        <begin position="184"/>
        <end position="191"/>
    </location>
    <ligand>
        <name>ATP</name>
        <dbReference type="ChEBI" id="CHEBI:30616"/>
    </ligand>
</feature>
<accession>Q4WQM4</accession>
<gene>
    <name type="primary">has1</name>
    <name type="ORF">AFUA_4G13330</name>
</gene>
<proteinExistence type="inferred from homology"/>
<dbReference type="EC" id="3.6.4.13"/>
<dbReference type="EMBL" id="AAHF01000005">
    <property type="protein sequence ID" value="EAL89460.2"/>
    <property type="molecule type" value="Genomic_DNA"/>
</dbReference>
<dbReference type="RefSeq" id="XP_751498.2">
    <property type="nucleotide sequence ID" value="XM_746405.2"/>
</dbReference>
<dbReference type="SMR" id="Q4WQM4"/>
<dbReference type="FunCoup" id="Q4WQM4">
    <property type="interactions" value="1174"/>
</dbReference>
<dbReference type="STRING" id="330879.Q4WQM4"/>
<dbReference type="EnsemblFungi" id="EAL89460">
    <property type="protein sequence ID" value="EAL89460"/>
    <property type="gene ID" value="AFUA_4G13330"/>
</dbReference>
<dbReference type="GeneID" id="3509518"/>
<dbReference type="KEGG" id="afm:AFUA_4G13330"/>
<dbReference type="VEuPathDB" id="FungiDB:Afu4g13330"/>
<dbReference type="eggNOG" id="KOG0342">
    <property type="taxonomic scope" value="Eukaryota"/>
</dbReference>
<dbReference type="HOGENOM" id="CLU_003041_26_5_1"/>
<dbReference type="InParanoid" id="Q4WQM4"/>
<dbReference type="OMA" id="LMEFHSQ"/>
<dbReference type="OrthoDB" id="10259640at2759"/>
<dbReference type="Proteomes" id="UP000002530">
    <property type="component" value="Chromosome 4"/>
</dbReference>
<dbReference type="GO" id="GO:0005635">
    <property type="term" value="C:nuclear envelope"/>
    <property type="evidence" value="ECO:0007669"/>
    <property type="project" value="EnsemblFungi"/>
</dbReference>
<dbReference type="GO" id="GO:0005730">
    <property type="term" value="C:nucleolus"/>
    <property type="evidence" value="ECO:0000318"/>
    <property type="project" value="GO_Central"/>
</dbReference>
<dbReference type="GO" id="GO:0030687">
    <property type="term" value="C:preribosome, large subunit precursor"/>
    <property type="evidence" value="ECO:0007669"/>
    <property type="project" value="EnsemblFungi"/>
</dbReference>
<dbReference type="GO" id="GO:0032040">
    <property type="term" value="C:small-subunit processome"/>
    <property type="evidence" value="ECO:0007669"/>
    <property type="project" value="EnsemblFungi"/>
</dbReference>
<dbReference type="GO" id="GO:0005524">
    <property type="term" value="F:ATP binding"/>
    <property type="evidence" value="ECO:0007669"/>
    <property type="project" value="UniProtKB-KW"/>
</dbReference>
<dbReference type="GO" id="GO:0016887">
    <property type="term" value="F:ATP hydrolysis activity"/>
    <property type="evidence" value="ECO:0007669"/>
    <property type="project" value="RHEA"/>
</dbReference>
<dbReference type="GO" id="GO:0042802">
    <property type="term" value="F:identical protein binding"/>
    <property type="evidence" value="ECO:0007669"/>
    <property type="project" value="EnsemblFungi"/>
</dbReference>
<dbReference type="GO" id="GO:0003723">
    <property type="term" value="F:RNA binding"/>
    <property type="evidence" value="ECO:0007669"/>
    <property type="project" value="UniProtKB-KW"/>
</dbReference>
<dbReference type="GO" id="GO:0003724">
    <property type="term" value="F:RNA helicase activity"/>
    <property type="evidence" value="ECO:0007669"/>
    <property type="project" value="UniProtKB-EC"/>
</dbReference>
<dbReference type="GO" id="GO:0000463">
    <property type="term" value="P:maturation of LSU-rRNA from tricistronic rRNA transcript (SSU-rRNA, 5.8S rRNA, LSU-rRNA)"/>
    <property type="evidence" value="ECO:0000318"/>
    <property type="project" value="GO_Central"/>
</dbReference>
<dbReference type="GO" id="GO:0000462">
    <property type="term" value="P:maturation of SSU-rRNA from tricistronic rRNA transcript (SSU-rRNA, 5.8S rRNA, LSU-rRNA)"/>
    <property type="evidence" value="ECO:0007669"/>
    <property type="project" value="EnsemblFungi"/>
</dbReference>
<dbReference type="GO" id="GO:1990417">
    <property type="term" value="P:snoRNA release from pre-rRNA"/>
    <property type="evidence" value="ECO:0007669"/>
    <property type="project" value="EnsemblFungi"/>
</dbReference>
<dbReference type="CDD" id="cd17942">
    <property type="entry name" value="DEADc_DDX18"/>
    <property type="match status" value="1"/>
</dbReference>
<dbReference type="CDD" id="cd18787">
    <property type="entry name" value="SF2_C_DEAD"/>
    <property type="match status" value="1"/>
</dbReference>
<dbReference type="FunFam" id="3.40.50.300:FF:000379">
    <property type="entry name" value="RNA helicase"/>
    <property type="match status" value="1"/>
</dbReference>
<dbReference type="FunFam" id="3.40.50.300:FF:000460">
    <property type="entry name" value="RNA helicase"/>
    <property type="match status" value="1"/>
</dbReference>
<dbReference type="Gene3D" id="3.40.50.300">
    <property type="entry name" value="P-loop containing nucleotide triphosphate hydrolases"/>
    <property type="match status" value="2"/>
</dbReference>
<dbReference type="InterPro" id="IPR044773">
    <property type="entry name" value="DDX18/Has1_DEADc"/>
</dbReference>
<dbReference type="InterPro" id="IPR011545">
    <property type="entry name" value="DEAD/DEAH_box_helicase_dom"/>
</dbReference>
<dbReference type="InterPro" id="IPR014001">
    <property type="entry name" value="Helicase_ATP-bd"/>
</dbReference>
<dbReference type="InterPro" id="IPR001650">
    <property type="entry name" value="Helicase_C-like"/>
</dbReference>
<dbReference type="InterPro" id="IPR027417">
    <property type="entry name" value="P-loop_NTPase"/>
</dbReference>
<dbReference type="InterPro" id="IPR000629">
    <property type="entry name" value="RNA-helicase_DEAD-box_CS"/>
</dbReference>
<dbReference type="InterPro" id="IPR014014">
    <property type="entry name" value="RNA_helicase_DEAD_Q_motif"/>
</dbReference>
<dbReference type="InterPro" id="IPR025313">
    <property type="entry name" value="SPB4-like_CTE"/>
</dbReference>
<dbReference type="PANTHER" id="PTHR24031">
    <property type="entry name" value="RNA HELICASE"/>
    <property type="match status" value="1"/>
</dbReference>
<dbReference type="Pfam" id="PF13959">
    <property type="entry name" value="CTE_SPB4"/>
    <property type="match status" value="1"/>
</dbReference>
<dbReference type="Pfam" id="PF00270">
    <property type="entry name" value="DEAD"/>
    <property type="match status" value="1"/>
</dbReference>
<dbReference type="Pfam" id="PF00271">
    <property type="entry name" value="Helicase_C"/>
    <property type="match status" value="1"/>
</dbReference>
<dbReference type="SMART" id="SM00487">
    <property type="entry name" value="DEXDc"/>
    <property type="match status" value="1"/>
</dbReference>
<dbReference type="SMART" id="SM01178">
    <property type="entry name" value="DUF4217"/>
    <property type="match status" value="1"/>
</dbReference>
<dbReference type="SMART" id="SM00490">
    <property type="entry name" value="HELICc"/>
    <property type="match status" value="1"/>
</dbReference>
<dbReference type="SUPFAM" id="SSF52540">
    <property type="entry name" value="P-loop containing nucleoside triphosphate hydrolases"/>
    <property type="match status" value="2"/>
</dbReference>
<dbReference type="PROSITE" id="PS00039">
    <property type="entry name" value="DEAD_ATP_HELICASE"/>
    <property type="match status" value="1"/>
</dbReference>
<dbReference type="PROSITE" id="PS51192">
    <property type="entry name" value="HELICASE_ATP_BIND_1"/>
    <property type="match status" value="1"/>
</dbReference>
<dbReference type="PROSITE" id="PS51194">
    <property type="entry name" value="HELICASE_CTER"/>
    <property type="match status" value="1"/>
</dbReference>
<dbReference type="PROSITE" id="PS51195">
    <property type="entry name" value="Q_MOTIF"/>
    <property type="match status" value="1"/>
</dbReference>
<evidence type="ECO:0000250" key="1"/>
<evidence type="ECO:0000255" key="2">
    <source>
        <dbReference type="PROSITE-ProRule" id="PRU00541"/>
    </source>
</evidence>
<evidence type="ECO:0000255" key="3">
    <source>
        <dbReference type="PROSITE-ProRule" id="PRU00542"/>
    </source>
</evidence>
<evidence type="ECO:0000256" key="4">
    <source>
        <dbReference type="SAM" id="MobiDB-lite"/>
    </source>
</evidence>
<evidence type="ECO:0000305" key="5"/>
<sequence length="622" mass="69202">MSGPVDTAKSITKKRKRKHGGGARAATETDDAITRPAIENGAVNDSPEKEEDTKKSEKNGKDKSAKKRKVSHASSDEGDESQEEQGAPAQADGDSDDNKDDGNDQSEAENGDNGDKKDTESTDLPSAGTLSLPTVEGEPQKFTELGLSEKTLKAINDMGFETMTEIQRRTIPPLLAGRDVLGAAKTGSGKTLSFLIPAVEMLSALRFKPRNGTGVIVVSPTRELALQIFGVARELCQYHSQTYGIVIGGANRRAEAEKLMKGVNLLIATPGRLLDHLQNTQGFVFKNLKTLVIDEADRILEVGFEDEMRQIVKILPSEERQTMLFSATQTTKVEDLARISLRPGPLYINVDHRKEHSTVEGLEQGYVICEADKRFLLLFSFLKRNLKKKIIVFFSSCNCVKYHAELLNYIDLPVLELHGKQKQQKRTNTFFEFCNAKQGTLICTDVAARGLDIPAVDWIIQFDPPDDPRDYIHRVGRTARGTNAKGRSLMFLQPSEVGFLKHLKEARVPVVEFEFPANKIVNVQSQLEKLIGQNYYLNKSAKEGYRSYLQAYASHSLRSVFDVHKLDLVKVAKGFGFSTPPRIDIQLGASLSRDKKQQQQGRRSYGSQPHSKGLKFKRKHDD</sequence>